<keyword id="KW-0687">Ribonucleoprotein</keyword>
<keyword id="KW-0689">Ribosomal protein</keyword>
<keyword id="KW-0694">RNA-binding</keyword>
<keyword id="KW-0699">rRNA-binding</keyword>
<evidence type="ECO:0000255" key="1">
    <source>
        <dbReference type="HAMAP-Rule" id="MF_01326"/>
    </source>
</evidence>
<evidence type="ECO:0000305" key="2"/>
<name>RL24_MYCBP</name>
<reference key="1">
    <citation type="journal article" date="2007" name="Proc. Natl. Acad. Sci. U.S.A.">
        <title>Genome plasticity of BCG and impact on vaccine efficacy.</title>
        <authorList>
            <person name="Brosch R."/>
            <person name="Gordon S.V."/>
            <person name="Garnier T."/>
            <person name="Eiglmeier K."/>
            <person name="Frigui W."/>
            <person name="Valenti P."/>
            <person name="Dos Santos S."/>
            <person name="Duthoy S."/>
            <person name="Lacroix C."/>
            <person name="Garcia-Pelayo C."/>
            <person name="Inwald J.K."/>
            <person name="Golby P."/>
            <person name="Garcia J.N."/>
            <person name="Hewinson R.G."/>
            <person name="Behr M.A."/>
            <person name="Quail M.A."/>
            <person name="Churcher C."/>
            <person name="Barrell B.G."/>
            <person name="Parkhill J."/>
            <person name="Cole S.T."/>
        </authorList>
    </citation>
    <scope>NUCLEOTIDE SEQUENCE [LARGE SCALE GENOMIC DNA]</scope>
    <source>
        <strain>BCG / Pasteur 1173P2</strain>
    </source>
</reference>
<protein>
    <recommendedName>
        <fullName evidence="1">Large ribosomal subunit protein uL24</fullName>
    </recommendedName>
    <alternativeName>
        <fullName evidence="2">50S ribosomal protein L24</fullName>
    </alternativeName>
</protein>
<sequence>MKVHKGDTVLVISGKDKGAKGKVLQAYPDRNRVLVEGVNRIKKHTAISTTQRGARSGGIVTQEAPIHVSNVMVVDSDGKPTRIGYRVDEETGKRVRISKRNGKDI</sequence>
<gene>
    <name evidence="1" type="primary">rplX</name>
    <name type="ordered locus">BCG_0765</name>
</gene>
<organism>
    <name type="scientific">Mycobacterium bovis (strain BCG / Pasteur 1173P2)</name>
    <dbReference type="NCBI Taxonomy" id="410289"/>
    <lineage>
        <taxon>Bacteria</taxon>
        <taxon>Bacillati</taxon>
        <taxon>Actinomycetota</taxon>
        <taxon>Actinomycetes</taxon>
        <taxon>Mycobacteriales</taxon>
        <taxon>Mycobacteriaceae</taxon>
        <taxon>Mycobacterium</taxon>
        <taxon>Mycobacterium tuberculosis complex</taxon>
    </lineage>
</organism>
<accession>A1KGJ6</accession>
<dbReference type="EMBL" id="AM408590">
    <property type="protein sequence ID" value="CAL70751.1"/>
    <property type="molecule type" value="Genomic_DNA"/>
</dbReference>
<dbReference type="RefSeq" id="WP_003403654.1">
    <property type="nucleotide sequence ID" value="NC_008769.1"/>
</dbReference>
<dbReference type="SMR" id="A1KGJ6"/>
<dbReference type="GeneID" id="45424680"/>
<dbReference type="KEGG" id="mbb:BCG_0765"/>
<dbReference type="HOGENOM" id="CLU_093315_2_0_11"/>
<dbReference type="Proteomes" id="UP000001472">
    <property type="component" value="Chromosome"/>
</dbReference>
<dbReference type="GO" id="GO:1990904">
    <property type="term" value="C:ribonucleoprotein complex"/>
    <property type="evidence" value="ECO:0007669"/>
    <property type="project" value="UniProtKB-KW"/>
</dbReference>
<dbReference type="GO" id="GO:0005840">
    <property type="term" value="C:ribosome"/>
    <property type="evidence" value="ECO:0007669"/>
    <property type="project" value="UniProtKB-KW"/>
</dbReference>
<dbReference type="GO" id="GO:0019843">
    <property type="term" value="F:rRNA binding"/>
    <property type="evidence" value="ECO:0007669"/>
    <property type="project" value="UniProtKB-UniRule"/>
</dbReference>
<dbReference type="GO" id="GO:0003735">
    <property type="term" value="F:structural constituent of ribosome"/>
    <property type="evidence" value="ECO:0007669"/>
    <property type="project" value="InterPro"/>
</dbReference>
<dbReference type="GO" id="GO:0006412">
    <property type="term" value="P:translation"/>
    <property type="evidence" value="ECO:0007669"/>
    <property type="project" value="UniProtKB-UniRule"/>
</dbReference>
<dbReference type="CDD" id="cd06089">
    <property type="entry name" value="KOW_RPL26"/>
    <property type="match status" value="1"/>
</dbReference>
<dbReference type="FunFam" id="2.30.30.30:FF:000004">
    <property type="entry name" value="50S ribosomal protein L24"/>
    <property type="match status" value="1"/>
</dbReference>
<dbReference type="Gene3D" id="2.30.30.30">
    <property type="match status" value="1"/>
</dbReference>
<dbReference type="HAMAP" id="MF_01326_B">
    <property type="entry name" value="Ribosomal_uL24_B"/>
    <property type="match status" value="1"/>
</dbReference>
<dbReference type="InterPro" id="IPR005824">
    <property type="entry name" value="KOW"/>
</dbReference>
<dbReference type="InterPro" id="IPR014722">
    <property type="entry name" value="Rib_uL2_dom2"/>
</dbReference>
<dbReference type="InterPro" id="IPR003256">
    <property type="entry name" value="Ribosomal_uL24"/>
</dbReference>
<dbReference type="InterPro" id="IPR005825">
    <property type="entry name" value="Ribosomal_uL24_CS"/>
</dbReference>
<dbReference type="InterPro" id="IPR041988">
    <property type="entry name" value="Ribosomal_uL24_KOW"/>
</dbReference>
<dbReference type="InterPro" id="IPR008991">
    <property type="entry name" value="Translation_prot_SH3-like_sf"/>
</dbReference>
<dbReference type="NCBIfam" id="TIGR01079">
    <property type="entry name" value="rplX_bact"/>
    <property type="match status" value="1"/>
</dbReference>
<dbReference type="PANTHER" id="PTHR12903">
    <property type="entry name" value="MITOCHONDRIAL RIBOSOMAL PROTEIN L24"/>
    <property type="match status" value="1"/>
</dbReference>
<dbReference type="Pfam" id="PF00467">
    <property type="entry name" value="KOW"/>
    <property type="match status" value="1"/>
</dbReference>
<dbReference type="Pfam" id="PF17136">
    <property type="entry name" value="ribosomal_L24"/>
    <property type="match status" value="1"/>
</dbReference>
<dbReference type="SMART" id="SM00739">
    <property type="entry name" value="KOW"/>
    <property type="match status" value="1"/>
</dbReference>
<dbReference type="SUPFAM" id="SSF50104">
    <property type="entry name" value="Translation proteins SH3-like domain"/>
    <property type="match status" value="1"/>
</dbReference>
<dbReference type="PROSITE" id="PS01108">
    <property type="entry name" value="RIBOSOMAL_L24"/>
    <property type="match status" value="1"/>
</dbReference>
<comment type="function">
    <text evidence="1">One of two assembly initiator proteins, it binds directly to the 5'-end of the 23S rRNA, where it nucleates assembly of the 50S subunit.</text>
</comment>
<comment type="function">
    <text evidence="1">One of the proteins that surrounds the polypeptide exit tunnel on the outside of the subunit.</text>
</comment>
<comment type="subunit">
    <text evidence="1">Part of the 50S ribosomal subunit.</text>
</comment>
<comment type="similarity">
    <text evidence="1">Belongs to the universal ribosomal protein uL24 family.</text>
</comment>
<proteinExistence type="inferred from homology"/>
<feature type="chain" id="PRO_1000052258" description="Large ribosomal subunit protein uL24">
    <location>
        <begin position="1"/>
        <end position="105"/>
    </location>
</feature>